<organism>
    <name type="scientific">Schizosaccharomyces pombe (strain 972 / ATCC 24843)</name>
    <name type="common">Fission yeast</name>
    <dbReference type="NCBI Taxonomy" id="284812"/>
    <lineage>
        <taxon>Eukaryota</taxon>
        <taxon>Fungi</taxon>
        <taxon>Dikarya</taxon>
        <taxon>Ascomycota</taxon>
        <taxon>Taphrinomycotina</taxon>
        <taxon>Schizosaccharomycetes</taxon>
        <taxon>Schizosaccharomycetales</taxon>
        <taxon>Schizosaccharomycetaceae</taxon>
        <taxon>Schizosaccharomyces</taxon>
    </lineage>
</organism>
<feature type="transit peptide" description="Mitochondrion" evidence="2">
    <location>
        <begin position="1"/>
        <end position="17"/>
    </location>
</feature>
<feature type="chain" id="PRO_0000317293" description="Large ribosomal subunit protein mL38">
    <location>
        <begin position="18"/>
        <end position="308"/>
    </location>
</feature>
<reference key="1">
    <citation type="journal article" date="2002" name="Nature">
        <title>The genome sequence of Schizosaccharomyces pombe.</title>
        <authorList>
            <person name="Wood V."/>
            <person name="Gwilliam R."/>
            <person name="Rajandream M.A."/>
            <person name="Lyne M.H."/>
            <person name="Lyne R."/>
            <person name="Stewart A."/>
            <person name="Sgouros J.G."/>
            <person name="Peat N."/>
            <person name="Hayles J."/>
            <person name="Baker S.G."/>
            <person name="Basham D."/>
            <person name="Bowman S."/>
            <person name="Brooks K."/>
            <person name="Brown D."/>
            <person name="Brown S."/>
            <person name="Chillingworth T."/>
            <person name="Churcher C.M."/>
            <person name="Collins M."/>
            <person name="Connor R."/>
            <person name="Cronin A."/>
            <person name="Davis P."/>
            <person name="Feltwell T."/>
            <person name="Fraser A."/>
            <person name="Gentles S."/>
            <person name="Goble A."/>
            <person name="Hamlin N."/>
            <person name="Harris D.E."/>
            <person name="Hidalgo J."/>
            <person name="Hodgson G."/>
            <person name="Holroyd S."/>
            <person name="Hornsby T."/>
            <person name="Howarth S."/>
            <person name="Huckle E.J."/>
            <person name="Hunt S."/>
            <person name="Jagels K."/>
            <person name="James K.D."/>
            <person name="Jones L."/>
            <person name="Jones M."/>
            <person name="Leather S."/>
            <person name="McDonald S."/>
            <person name="McLean J."/>
            <person name="Mooney P."/>
            <person name="Moule S."/>
            <person name="Mungall K.L."/>
            <person name="Murphy L.D."/>
            <person name="Niblett D."/>
            <person name="Odell C."/>
            <person name="Oliver K."/>
            <person name="O'Neil S."/>
            <person name="Pearson D."/>
            <person name="Quail M.A."/>
            <person name="Rabbinowitsch E."/>
            <person name="Rutherford K.M."/>
            <person name="Rutter S."/>
            <person name="Saunders D."/>
            <person name="Seeger K."/>
            <person name="Sharp S."/>
            <person name="Skelton J."/>
            <person name="Simmonds M.N."/>
            <person name="Squares R."/>
            <person name="Squares S."/>
            <person name="Stevens K."/>
            <person name="Taylor K."/>
            <person name="Taylor R.G."/>
            <person name="Tivey A."/>
            <person name="Walsh S.V."/>
            <person name="Warren T."/>
            <person name="Whitehead S."/>
            <person name="Woodward J.R."/>
            <person name="Volckaert G."/>
            <person name="Aert R."/>
            <person name="Robben J."/>
            <person name="Grymonprez B."/>
            <person name="Weltjens I."/>
            <person name="Vanstreels E."/>
            <person name="Rieger M."/>
            <person name="Schaefer M."/>
            <person name="Mueller-Auer S."/>
            <person name="Gabel C."/>
            <person name="Fuchs M."/>
            <person name="Duesterhoeft A."/>
            <person name="Fritzc C."/>
            <person name="Holzer E."/>
            <person name="Moestl D."/>
            <person name="Hilbert H."/>
            <person name="Borzym K."/>
            <person name="Langer I."/>
            <person name="Beck A."/>
            <person name="Lehrach H."/>
            <person name="Reinhardt R."/>
            <person name="Pohl T.M."/>
            <person name="Eger P."/>
            <person name="Zimmermann W."/>
            <person name="Wedler H."/>
            <person name="Wambutt R."/>
            <person name="Purnelle B."/>
            <person name="Goffeau A."/>
            <person name="Cadieu E."/>
            <person name="Dreano S."/>
            <person name="Gloux S."/>
            <person name="Lelaure V."/>
            <person name="Mottier S."/>
            <person name="Galibert F."/>
            <person name="Aves S.J."/>
            <person name="Xiang Z."/>
            <person name="Hunt C."/>
            <person name="Moore K."/>
            <person name="Hurst S.M."/>
            <person name="Lucas M."/>
            <person name="Rochet M."/>
            <person name="Gaillardin C."/>
            <person name="Tallada V.A."/>
            <person name="Garzon A."/>
            <person name="Thode G."/>
            <person name="Daga R.R."/>
            <person name="Cruzado L."/>
            <person name="Jimenez J."/>
            <person name="Sanchez M."/>
            <person name="del Rey F."/>
            <person name="Benito J."/>
            <person name="Dominguez A."/>
            <person name="Revuelta J.L."/>
            <person name="Moreno S."/>
            <person name="Armstrong J."/>
            <person name="Forsburg S.L."/>
            <person name="Cerutti L."/>
            <person name="Lowe T."/>
            <person name="McCombie W.R."/>
            <person name="Paulsen I."/>
            <person name="Potashkin J."/>
            <person name="Shpakovski G.V."/>
            <person name="Ussery D."/>
            <person name="Barrell B.G."/>
            <person name="Nurse P."/>
        </authorList>
    </citation>
    <scope>NUCLEOTIDE SEQUENCE [LARGE SCALE GENOMIC DNA]</scope>
    <source>
        <strain>972 / ATCC 24843</strain>
    </source>
</reference>
<reference key="2">
    <citation type="journal article" date="2011" name="Science">
        <title>Comparative functional genomics of the fission yeasts.</title>
        <authorList>
            <person name="Rhind N."/>
            <person name="Chen Z."/>
            <person name="Yassour M."/>
            <person name="Thompson D.A."/>
            <person name="Haas B.J."/>
            <person name="Habib N."/>
            <person name="Wapinski I."/>
            <person name="Roy S."/>
            <person name="Lin M.F."/>
            <person name="Heiman D.I."/>
            <person name="Young S.K."/>
            <person name="Furuya K."/>
            <person name="Guo Y."/>
            <person name="Pidoux A."/>
            <person name="Chen H.M."/>
            <person name="Robbertse B."/>
            <person name="Goldberg J.M."/>
            <person name="Aoki K."/>
            <person name="Bayne E.H."/>
            <person name="Berlin A.M."/>
            <person name="Desjardins C.A."/>
            <person name="Dobbs E."/>
            <person name="Dukaj L."/>
            <person name="Fan L."/>
            <person name="FitzGerald M.G."/>
            <person name="French C."/>
            <person name="Gujja S."/>
            <person name="Hansen K."/>
            <person name="Keifenheim D."/>
            <person name="Levin J.Z."/>
            <person name="Mosher R.A."/>
            <person name="Mueller C.A."/>
            <person name="Pfiffner J."/>
            <person name="Priest M."/>
            <person name="Russ C."/>
            <person name="Smialowska A."/>
            <person name="Swoboda P."/>
            <person name="Sykes S.M."/>
            <person name="Vaughn M."/>
            <person name="Vengrova S."/>
            <person name="Yoder R."/>
            <person name="Zeng Q."/>
            <person name="Allshire R."/>
            <person name="Baulcombe D."/>
            <person name="Birren B.W."/>
            <person name="Brown W."/>
            <person name="Ekwall K."/>
            <person name="Kellis M."/>
            <person name="Leatherwood J."/>
            <person name="Levin H."/>
            <person name="Margalit H."/>
            <person name="Martienssen R."/>
            <person name="Nieduszynski C.A."/>
            <person name="Spatafora J.W."/>
            <person name="Friedman N."/>
            <person name="Dalgaard J.Z."/>
            <person name="Baumann P."/>
            <person name="Niki H."/>
            <person name="Regev A."/>
            <person name="Nusbaum C."/>
        </authorList>
    </citation>
    <scope>REVISION OF GENE MODEL</scope>
</reference>
<reference key="3">
    <citation type="journal article" date="2006" name="Nat. Biotechnol.">
        <title>ORFeome cloning and global analysis of protein localization in the fission yeast Schizosaccharomyces pombe.</title>
        <authorList>
            <person name="Matsuyama A."/>
            <person name="Arai R."/>
            <person name="Yashiroda Y."/>
            <person name="Shirai A."/>
            <person name="Kamata A."/>
            <person name="Sekido S."/>
            <person name="Kobayashi Y."/>
            <person name="Hashimoto A."/>
            <person name="Hamamoto M."/>
            <person name="Hiraoka Y."/>
            <person name="Horinouchi S."/>
            <person name="Yoshida M."/>
        </authorList>
    </citation>
    <scope>SUBCELLULAR LOCATION [LARGE SCALE ANALYSIS]</scope>
</reference>
<accession>O14341</accession>
<protein>
    <recommendedName>
        <fullName evidence="4">Large ribosomal subunit protein mL38</fullName>
    </recommendedName>
    <alternativeName>
        <fullName>54S ribosomal protein L35, mitochondrial</fullName>
    </alternativeName>
</protein>
<proteinExistence type="inferred from homology"/>
<dbReference type="EMBL" id="CU329671">
    <property type="protein sequence ID" value="CAB10157.2"/>
    <property type="molecule type" value="Genomic_DNA"/>
</dbReference>
<dbReference type="PIR" id="T40131">
    <property type="entry name" value="T40131"/>
</dbReference>
<dbReference type="RefSeq" id="NP_595706.2">
    <property type="nucleotide sequence ID" value="NM_001021603.2"/>
</dbReference>
<dbReference type="SMR" id="O14341"/>
<dbReference type="BioGRID" id="276894">
    <property type="interactions" value="1"/>
</dbReference>
<dbReference type="ComplexPortal" id="CPX-10323">
    <property type="entry name" value="54S mitochondrial large ribosomal subunit"/>
</dbReference>
<dbReference type="FunCoup" id="O14341">
    <property type="interactions" value="13"/>
</dbReference>
<dbReference type="STRING" id="284812.O14341"/>
<dbReference type="iPTMnet" id="O14341"/>
<dbReference type="PaxDb" id="4896-SPBC2F12.10.1"/>
<dbReference type="EnsemblFungi" id="SPBC2F12.10.1">
    <property type="protein sequence ID" value="SPBC2F12.10.1:pep"/>
    <property type="gene ID" value="SPBC2F12.10"/>
</dbReference>
<dbReference type="PomBase" id="SPBC2F12.10">
    <property type="gene designation" value="mrpl35"/>
</dbReference>
<dbReference type="VEuPathDB" id="FungiDB:SPBC2F12.10"/>
<dbReference type="eggNOG" id="KOG3346">
    <property type="taxonomic scope" value="Eukaryota"/>
</dbReference>
<dbReference type="HOGENOM" id="CLU_035836_1_1_1"/>
<dbReference type="InParanoid" id="O14341"/>
<dbReference type="OMA" id="FRTQWDE"/>
<dbReference type="PRO" id="PR:O14341"/>
<dbReference type="Proteomes" id="UP000002485">
    <property type="component" value="Chromosome II"/>
</dbReference>
<dbReference type="GO" id="GO:0005762">
    <property type="term" value="C:mitochondrial large ribosomal subunit"/>
    <property type="evidence" value="ECO:0000250"/>
    <property type="project" value="PomBase"/>
</dbReference>
<dbReference type="GO" id="GO:0005739">
    <property type="term" value="C:mitochondrion"/>
    <property type="evidence" value="ECO:0007005"/>
    <property type="project" value="PomBase"/>
</dbReference>
<dbReference type="GO" id="GO:0003735">
    <property type="term" value="F:structural constituent of ribosome"/>
    <property type="evidence" value="ECO:0000250"/>
    <property type="project" value="PomBase"/>
</dbReference>
<dbReference type="GO" id="GO:0032543">
    <property type="term" value="P:mitochondrial translation"/>
    <property type="evidence" value="ECO:0000250"/>
    <property type="project" value="PomBase"/>
</dbReference>
<dbReference type="CDD" id="cd00866">
    <property type="entry name" value="PEBP_euk"/>
    <property type="match status" value="1"/>
</dbReference>
<dbReference type="FunFam" id="3.90.280.10:FF:000004">
    <property type="entry name" value="Mitochondrial large ribosomal subunit YmL35"/>
    <property type="match status" value="1"/>
</dbReference>
<dbReference type="Gene3D" id="1.20.58.1180">
    <property type="match status" value="1"/>
</dbReference>
<dbReference type="Gene3D" id="3.90.280.10">
    <property type="entry name" value="PEBP-like"/>
    <property type="match status" value="1"/>
</dbReference>
<dbReference type="InterPro" id="IPR008914">
    <property type="entry name" value="PEBP"/>
</dbReference>
<dbReference type="InterPro" id="IPR036610">
    <property type="entry name" value="PEBP-like_sf"/>
</dbReference>
<dbReference type="InterPro" id="IPR035810">
    <property type="entry name" value="PEBP_euk"/>
</dbReference>
<dbReference type="PANTHER" id="PTHR11362">
    <property type="entry name" value="PHOSPHATIDYLETHANOLAMINE-BINDING PROTEIN"/>
    <property type="match status" value="1"/>
</dbReference>
<dbReference type="PANTHER" id="PTHR11362:SF82">
    <property type="entry name" value="PHOSPHATIDYLETHANOLAMINE-BINDING PROTEIN 4"/>
    <property type="match status" value="1"/>
</dbReference>
<dbReference type="Pfam" id="PF01161">
    <property type="entry name" value="PBP"/>
    <property type="match status" value="1"/>
</dbReference>
<dbReference type="SUPFAM" id="SSF49777">
    <property type="entry name" value="PEBP-like"/>
    <property type="match status" value="1"/>
</dbReference>
<gene>
    <name type="primary">mrpl35</name>
    <name type="ORF">SPBC2F12.10</name>
</gene>
<evidence type="ECO:0000250" key="1">
    <source>
        <dbReference type="UniProtKB" id="Q06678"/>
    </source>
</evidence>
<evidence type="ECO:0000255" key="2"/>
<evidence type="ECO:0000269" key="3">
    <source>
    </source>
</evidence>
<evidence type="ECO:0000305" key="4"/>
<keyword id="KW-0496">Mitochondrion</keyword>
<keyword id="KW-1185">Reference proteome</keyword>
<keyword id="KW-0687">Ribonucleoprotein</keyword>
<keyword id="KW-0689">Ribosomal protein</keyword>
<keyword id="KW-0809">Transit peptide</keyword>
<sequence>MKRVWPRIPTISNVCRARSIYSAAQENAYRSSVKLIQEYSEKVHKKLQAKLLENPSETSPEIERLQVLSQINLPEVRSKFHKKEIDYTNPVFLYMLKQQWEDYQKLLLLQRLEQMKVIKDSGIGSFSPSVDVQLGFNPENNDSITPGTILPSTVTVKTPWLSVLPFNCKKNHYSVITLDLDVPNYETNRFETHCNWLLTNIPIEASKRVPIDTSKAFFQYRPPIVHRGEDKHRILTLVLRQKSSSISIPSNALVRERFDLSEFCSIYDLEPVGAHLWRSGWDSDAVALLSKHPSVHEYRDIRVERIPA</sequence>
<comment type="function">
    <text evidence="1">Component of the mitochondrial ribosome (mitoribosome), a dedicated translation machinery responsible for the synthesis of mitochondrial genome-encoded proteins, including at least some of the essential transmembrane subunits of the mitochondrial respiratory chain. The mitoribosomes are attached to the mitochondrial inner membrane and translation products are cotranslationally integrated into the membrane.</text>
</comment>
<comment type="subunit">
    <text evidence="1">Component of the mitochondrial large ribosomal subunit (mt-LSU). Mature yeast 74S mitochondrial ribosomes consist of a small (37S) and a large (54S) subunit. The 37S small subunit contains a 15S ribosomal RNA (15S mt-rRNA) and at least 32 different proteins. The 54S large subunit contains a 21S rRNA (21S mt-rRNA) and at least 45 different proteins.</text>
</comment>
<comment type="subcellular location">
    <subcellularLocation>
        <location evidence="3">Mitochondrion</location>
    </subcellularLocation>
</comment>
<comment type="similarity">
    <text evidence="4">Belongs to the phosphatidylethanolamine-binding protein family. Mitochondrion-specific ribosomal protein mL38 subfamily.</text>
</comment>
<name>RM35_SCHPO</name>